<reference key="1">
    <citation type="submission" date="2007-06" db="EMBL/GenBank/DDBJ databases">
        <title>Complete sequence of Methanococcus maripaludis C7.</title>
        <authorList>
            <consortium name="US DOE Joint Genome Institute"/>
            <person name="Copeland A."/>
            <person name="Lucas S."/>
            <person name="Lapidus A."/>
            <person name="Barry K."/>
            <person name="Glavina del Rio T."/>
            <person name="Dalin E."/>
            <person name="Tice H."/>
            <person name="Pitluck S."/>
            <person name="Clum A."/>
            <person name="Schmutz J."/>
            <person name="Larimer F."/>
            <person name="Land M."/>
            <person name="Hauser L."/>
            <person name="Kyrpides N."/>
            <person name="Anderson I."/>
            <person name="Sieprawska-Lupa M."/>
            <person name="Whitman W.B."/>
            <person name="Richardson P."/>
        </authorList>
    </citation>
    <scope>NUCLEOTIDE SEQUENCE [LARGE SCALE GENOMIC DNA]</scope>
    <source>
        <strain>C7 / ATCC BAA-1331</strain>
    </source>
</reference>
<sequence length="113" mass="12049">MGNYHVTLQASYIAKNVEDVEDAIGVAISQIGKLLNKGSLDYVDIDVGLTICPKCGEPIDCVLVVAKTAIVGILLSMKVFNAESPEHAVRIAKSSIGRALKDIPLEDVDVVEI</sequence>
<organism>
    <name type="scientific">Methanococcus maripaludis (strain C7 / ATCC BAA-1331)</name>
    <dbReference type="NCBI Taxonomy" id="426368"/>
    <lineage>
        <taxon>Archaea</taxon>
        <taxon>Methanobacteriati</taxon>
        <taxon>Methanobacteriota</taxon>
        <taxon>Methanomada group</taxon>
        <taxon>Methanococci</taxon>
        <taxon>Methanococcales</taxon>
        <taxon>Methanococcaceae</taxon>
        <taxon>Methanococcus</taxon>
    </lineage>
</organism>
<evidence type="ECO:0000255" key="1">
    <source>
        <dbReference type="HAMAP-Rule" id="MF_01223"/>
    </source>
</evidence>
<dbReference type="EMBL" id="CP000745">
    <property type="protein sequence ID" value="ABR65820.1"/>
    <property type="molecule type" value="Genomic_DNA"/>
</dbReference>
<dbReference type="STRING" id="426368.MmarC7_0753"/>
<dbReference type="KEGG" id="mmz:MmarC7_0753"/>
<dbReference type="eggNOG" id="arCOG02119">
    <property type="taxonomic scope" value="Archaea"/>
</dbReference>
<dbReference type="HOGENOM" id="CLU_138334_0_0_2"/>
<dbReference type="OrthoDB" id="63517at2157"/>
<dbReference type="HAMAP" id="MF_01223">
    <property type="entry name" value="UPF0212"/>
    <property type="match status" value="1"/>
</dbReference>
<dbReference type="InterPro" id="IPR007564">
    <property type="entry name" value="UPF0212"/>
</dbReference>
<dbReference type="NCBIfam" id="NF003035">
    <property type="entry name" value="PRK03922.1"/>
    <property type="match status" value="1"/>
</dbReference>
<dbReference type="PANTHER" id="PTHR42199">
    <property type="entry name" value="UPF0212 PROTEIN MJ0068"/>
    <property type="match status" value="1"/>
</dbReference>
<dbReference type="PANTHER" id="PTHR42199:SF1">
    <property type="entry name" value="UPF0212 PROTEIN TK1194"/>
    <property type="match status" value="1"/>
</dbReference>
<dbReference type="Pfam" id="PF04475">
    <property type="entry name" value="DUF555"/>
    <property type="match status" value="1"/>
</dbReference>
<dbReference type="PIRSF" id="PIRSF016934">
    <property type="entry name" value="UCP016934"/>
    <property type="match status" value="1"/>
</dbReference>
<proteinExistence type="inferred from homology"/>
<comment type="similarity">
    <text evidence="1">Belongs to the UPF0212 family.</text>
</comment>
<feature type="chain" id="PRO_1000066792" description="UPF0212 protein MmarC7_0753">
    <location>
        <begin position="1"/>
        <end position="113"/>
    </location>
</feature>
<gene>
    <name type="ordered locus">MmarC7_0753</name>
</gene>
<protein>
    <recommendedName>
        <fullName evidence="1">UPF0212 protein MmarC7_0753</fullName>
    </recommendedName>
</protein>
<accession>A6VH94</accession>
<name>Y753_METM7</name>